<comment type="function">
    <text evidence="1">Catalyzes the conversion of N-acetyl-diaminopimelate to diaminopimelate and acetate.</text>
</comment>
<comment type="catalytic activity">
    <reaction evidence="1">
        <text>N-acetyl-(2S,6S)-2,6-diaminopimelate + H2O = (2S,6S)-2,6-diaminopimelate + acetate</text>
        <dbReference type="Rhea" id="RHEA:20405"/>
        <dbReference type="ChEBI" id="CHEBI:15377"/>
        <dbReference type="ChEBI" id="CHEBI:30089"/>
        <dbReference type="ChEBI" id="CHEBI:57609"/>
        <dbReference type="ChEBI" id="CHEBI:58767"/>
        <dbReference type="EC" id="3.5.1.47"/>
    </reaction>
</comment>
<comment type="pathway">
    <text evidence="1">Amino-acid biosynthesis; L-lysine biosynthesis via DAP pathway; LL-2,6-diaminopimelate from (S)-tetrahydrodipicolinate (acetylase route): step 3/3.</text>
</comment>
<comment type="similarity">
    <text evidence="1">Belongs to the peptidase M20A family. N-acetyldiaminopimelate deacetylase subfamily.</text>
</comment>
<sequence length="376" mass="41869">MAVSKFIQIRRDLHKIPEIGFKEWKTQQYILDYIGTLSNEHVEVKVWETGVIVKVNGKNPEKIIGYRADIDGLPITEETGYEFASIHEGMMHACGHDVHTTIGLGLLTAAVTERIDDDLVFLFQPAEEGPGGALPMLESEELKEWKPNIILGLHIAPEYPVGTIATKEGLLFANTSELYVDLKGKGGHAAYPHTANDMIVAASHLVTQLQSVISRNVNPLDSAVITIGKITGGTVQNIIAEKSRLEGTIRTLSVESMSRVKSRIEAIIAGIEASFQCEAVIDYGAMYHQVYNHEALTREFMQFVSEQTDMKVITCTEAMTGEDFGYMLQEIPGFMFWLGVNSEYGLHHAKLKPDEEAIEKAIVFLDQYVKWKGTRK</sequence>
<accession>C1EPZ4</accession>
<feature type="chain" id="PRO_1000187458" description="N-acetyldiaminopimelate deacetylase">
    <location>
        <begin position="1"/>
        <end position="376"/>
    </location>
</feature>
<feature type="active site" evidence="1">
    <location>
        <position position="69"/>
    </location>
</feature>
<feature type="active site" description="Proton acceptor" evidence="1">
    <location>
        <position position="128"/>
    </location>
</feature>
<evidence type="ECO:0000255" key="1">
    <source>
        <dbReference type="HAMAP-Rule" id="MF_01692"/>
    </source>
</evidence>
<protein>
    <recommendedName>
        <fullName evidence="1">N-acetyldiaminopimelate deacetylase</fullName>
        <ecNumber evidence="1">3.5.1.47</ecNumber>
    </recommendedName>
</protein>
<reference key="1">
    <citation type="submission" date="2009-02" db="EMBL/GenBank/DDBJ databases">
        <title>Genome sequence of Bacillus cereus 03BB102.</title>
        <authorList>
            <person name="Dodson R.J."/>
            <person name="Jackson P."/>
            <person name="Munk A.C."/>
            <person name="Brettin T."/>
            <person name="Bruce D."/>
            <person name="Detter C."/>
            <person name="Tapia R."/>
            <person name="Han C."/>
            <person name="Sutton G."/>
            <person name="Sims D."/>
        </authorList>
    </citation>
    <scope>NUCLEOTIDE SEQUENCE [LARGE SCALE GENOMIC DNA]</scope>
    <source>
        <strain>03BB102</strain>
    </source>
</reference>
<dbReference type="EC" id="3.5.1.47" evidence="1"/>
<dbReference type="EMBL" id="CP001407">
    <property type="protein sequence ID" value="ACO25886.1"/>
    <property type="molecule type" value="Genomic_DNA"/>
</dbReference>
<dbReference type="RefSeq" id="WP_000301156.1">
    <property type="nucleotide sequence ID" value="NZ_CP009318.1"/>
</dbReference>
<dbReference type="SMR" id="C1EPZ4"/>
<dbReference type="MEROPS" id="M20.A27"/>
<dbReference type="KEGG" id="bcx:BCA_4085"/>
<dbReference type="PATRIC" id="fig|572264.18.peg.4038"/>
<dbReference type="UniPathway" id="UPA00034">
    <property type="reaction ID" value="UER00024"/>
</dbReference>
<dbReference type="Proteomes" id="UP000002210">
    <property type="component" value="Chromosome"/>
</dbReference>
<dbReference type="GO" id="GO:0050118">
    <property type="term" value="F:N-acetyldiaminopimelate deacetylase activity"/>
    <property type="evidence" value="ECO:0007669"/>
    <property type="project" value="UniProtKB-UniRule"/>
</dbReference>
<dbReference type="GO" id="GO:0019877">
    <property type="term" value="P:diaminopimelate biosynthetic process"/>
    <property type="evidence" value="ECO:0007669"/>
    <property type="project" value="UniProtKB-UniRule"/>
</dbReference>
<dbReference type="GO" id="GO:0009089">
    <property type="term" value="P:lysine biosynthetic process via diaminopimelate"/>
    <property type="evidence" value="ECO:0007669"/>
    <property type="project" value="UniProtKB-UniRule"/>
</dbReference>
<dbReference type="CDD" id="cd05670">
    <property type="entry name" value="M20_Acy1_YkuR-like"/>
    <property type="match status" value="1"/>
</dbReference>
<dbReference type="FunFam" id="3.30.70.360:FF:000001">
    <property type="entry name" value="N-acetyldiaminopimelate deacetylase"/>
    <property type="match status" value="1"/>
</dbReference>
<dbReference type="Gene3D" id="3.30.70.360">
    <property type="match status" value="1"/>
</dbReference>
<dbReference type="Gene3D" id="3.40.630.10">
    <property type="entry name" value="Zn peptidases"/>
    <property type="match status" value="1"/>
</dbReference>
<dbReference type="HAMAP" id="MF_01692">
    <property type="entry name" value="DapEL"/>
    <property type="match status" value="1"/>
</dbReference>
<dbReference type="InterPro" id="IPR023905">
    <property type="entry name" value="AcetylDAP_deacetylase"/>
</dbReference>
<dbReference type="InterPro" id="IPR017439">
    <property type="entry name" value="Amidohydrolase"/>
</dbReference>
<dbReference type="InterPro" id="IPR036264">
    <property type="entry name" value="Bact_exopeptidase_dim_dom"/>
</dbReference>
<dbReference type="InterPro" id="IPR002933">
    <property type="entry name" value="Peptidase_M20"/>
</dbReference>
<dbReference type="InterPro" id="IPR011650">
    <property type="entry name" value="Peptidase_M20_dimer"/>
</dbReference>
<dbReference type="NCBIfam" id="TIGR01891">
    <property type="entry name" value="amidohydrolases"/>
    <property type="match status" value="1"/>
</dbReference>
<dbReference type="PANTHER" id="PTHR11014:SF98">
    <property type="entry name" value="N-ACETYLDIAMINOPIMELATE DEACETYLASE"/>
    <property type="match status" value="1"/>
</dbReference>
<dbReference type="PANTHER" id="PTHR11014">
    <property type="entry name" value="PEPTIDASE M20 FAMILY MEMBER"/>
    <property type="match status" value="1"/>
</dbReference>
<dbReference type="Pfam" id="PF07687">
    <property type="entry name" value="M20_dimer"/>
    <property type="match status" value="1"/>
</dbReference>
<dbReference type="Pfam" id="PF01546">
    <property type="entry name" value="Peptidase_M20"/>
    <property type="match status" value="1"/>
</dbReference>
<dbReference type="PIRSF" id="PIRSF005962">
    <property type="entry name" value="Pept_M20D_amidohydro"/>
    <property type="match status" value="1"/>
</dbReference>
<dbReference type="SUPFAM" id="SSF55031">
    <property type="entry name" value="Bacterial exopeptidase dimerisation domain"/>
    <property type="match status" value="1"/>
</dbReference>
<dbReference type="SUPFAM" id="SSF53187">
    <property type="entry name" value="Zn-dependent exopeptidases"/>
    <property type="match status" value="1"/>
</dbReference>
<keyword id="KW-0028">Amino-acid biosynthesis</keyword>
<keyword id="KW-0220">Diaminopimelate biosynthesis</keyword>
<keyword id="KW-0378">Hydrolase</keyword>
<keyword id="KW-0457">Lysine biosynthesis</keyword>
<gene>
    <name type="ordered locus">BCA_4085</name>
</gene>
<name>DAPEL_BACC3</name>
<organism>
    <name type="scientific">Bacillus cereus (strain 03BB102)</name>
    <dbReference type="NCBI Taxonomy" id="572264"/>
    <lineage>
        <taxon>Bacteria</taxon>
        <taxon>Bacillati</taxon>
        <taxon>Bacillota</taxon>
        <taxon>Bacilli</taxon>
        <taxon>Bacillales</taxon>
        <taxon>Bacillaceae</taxon>
        <taxon>Bacillus</taxon>
        <taxon>Bacillus cereus group</taxon>
    </lineage>
</organism>
<proteinExistence type="inferred from homology"/>